<keyword id="KW-0106">Calcium</keyword>
<keyword id="KW-1003">Cell membrane</keyword>
<keyword id="KW-0255">Endonuclease</keyword>
<keyword id="KW-0378">Hydrolase</keyword>
<keyword id="KW-0449">Lipoprotein</keyword>
<keyword id="KW-0472">Membrane</keyword>
<keyword id="KW-0479">Metal-binding</keyword>
<keyword id="KW-0519">Myristate</keyword>
<keyword id="KW-0540">Nuclease</keyword>
<keyword id="KW-0564">Palmitate</keyword>
<keyword id="KW-1185">Reference proteome</keyword>
<accession>F4IZC5</accession>
<accession>Q9LWC0</accession>
<accession>Q9LYM4</accession>
<protein>
    <recommendedName>
        <fullName>Staphylococcal-like nuclease CAN1</fullName>
        <ecNumber>3.1.31.-</ecNumber>
    </recommendedName>
    <alternativeName>
        <fullName>Calcium-dependent nuclease 1</fullName>
        <shortName>AtCAN1</shortName>
        <shortName>Ca(2+)-dependent nuclease 1</shortName>
    </alternativeName>
</protein>
<proteinExistence type="evidence at protein level"/>
<dbReference type="EC" id="3.1.31.-"/>
<dbReference type="EMBL" id="D84226">
    <property type="protein sequence ID" value="BAA95210.1"/>
    <property type="molecule type" value="mRNA"/>
</dbReference>
<dbReference type="EMBL" id="AL163763">
    <property type="protein sequence ID" value="CAB87416.1"/>
    <property type="status" value="ALT_SEQ"/>
    <property type="molecule type" value="Genomic_DNA"/>
</dbReference>
<dbReference type="EMBL" id="CP002686">
    <property type="protein sequence ID" value="AEE79489.1"/>
    <property type="molecule type" value="Genomic_DNA"/>
</dbReference>
<dbReference type="PIR" id="T47734">
    <property type="entry name" value="T47734"/>
</dbReference>
<dbReference type="PIR" id="T52640">
    <property type="entry name" value="T52640"/>
</dbReference>
<dbReference type="RefSeq" id="NP_567036.1">
    <property type="nucleotide sequence ID" value="NM_115475.5"/>
</dbReference>
<dbReference type="SMR" id="F4IZC5"/>
<dbReference type="FunCoup" id="F4IZC5">
    <property type="interactions" value="15"/>
</dbReference>
<dbReference type="IntAct" id="F4IZC5">
    <property type="interactions" value="1"/>
</dbReference>
<dbReference type="MINT" id="F4IZC5"/>
<dbReference type="STRING" id="3702.F4IZC5"/>
<dbReference type="PaxDb" id="3702-AT3G56170.1"/>
<dbReference type="ProteomicsDB" id="239189"/>
<dbReference type="EnsemblPlants" id="AT3G56170.1">
    <property type="protein sequence ID" value="AT3G56170.1"/>
    <property type="gene ID" value="AT3G56170"/>
</dbReference>
<dbReference type="GeneID" id="824783"/>
<dbReference type="Gramene" id="AT3G56170.1">
    <property type="protein sequence ID" value="AT3G56170.1"/>
    <property type="gene ID" value="AT3G56170"/>
</dbReference>
<dbReference type="KEGG" id="ath:AT3G56170"/>
<dbReference type="Araport" id="AT3G56170"/>
<dbReference type="TAIR" id="AT3G56170">
    <property type="gene designation" value="CAN"/>
</dbReference>
<dbReference type="eggNOG" id="ENOG502QT2R">
    <property type="taxonomic scope" value="Eukaryota"/>
</dbReference>
<dbReference type="HOGENOM" id="CLU_046484_1_1_1"/>
<dbReference type="InParanoid" id="F4IZC5"/>
<dbReference type="OMA" id="SPESKMP"/>
<dbReference type="OrthoDB" id="430293at2759"/>
<dbReference type="PRO" id="PR:F4IZC5"/>
<dbReference type="Proteomes" id="UP000006548">
    <property type="component" value="Chromosome 3"/>
</dbReference>
<dbReference type="ExpressionAtlas" id="F4IZC5">
    <property type="expression patterns" value="baseline and differential"/>
</dbReference>
<dbReference type="GO" id="GO:0005886">
    <property type="term" value="C:plasma membrane"/>
    <property type="evidence" value="ECO:0007669"/>
    <property type="project" value="UniProtKB-SubCell"/>
</dbReference>
<dbReference type="GO" id="GO:0004519">
    <property type="term" value="F:endonuclease activity"/>
    <property type="evidence" value="ECO:0007669"/>
    <property type="project" value="UniProtKB-KW"/>
</dbReference>
<dbReference type="GO" id="GO:0046872">
    <property type="term" value="F:metal ion binding"/>
    <property type="evidence" value="ECO:0007669"/>
    <property type="project" value="UniProtKB-KW"/>
</dbReference>
<dbReference type="GO" id="GO:0004518">
    <property type="term" value="F:nuclease activity"/>
    <property type="evidence" value="ECO:0000314"/>
    <property type="project" value="TAIR"/>
</dbReference>
<dbReference type="GO" id="GO:0003676">
    <property type="term" value="F:nucleic acid binding"/>
    <property type="evidence" value="ECO:0007669"/>
    <property type="project" value="InterPro"/>
</dbReference>
<dbReference type="Gene3D" id="2.40.50.90">
    <property type="match status" value="1"/>
</dbReference>
<dbReference type="InterPro" id="IPR035437">
    <property type="entry name" value="SNase_OB-fold_sf"/>
</dbReference>
<dbReference type="InterPro" id="IPR016071">
    <property type="entry name" value="Staphylococal_nuclease_OB-fold"/>
</dbReference>
<dbReference type="InterPro" id="IPR002071">
    <property type="entry name" value="Thermonucl_AS"/>
</dbReference>
<dbReference type="PANTHER" id="PTHR12302">
    <property type="entry name" value="EBNA2 BINDING PROTEIN P100"/>
    <property type="match status" value="1"/>
</dbReference>
<dbReference type="PANTHER" id="PTHR12302:SF24">
    <property type="entry name" value="STAPHYLOCOCCAL-LIKE NUCLEASE CAN1"/>
    <property type="match status" value="1"/>
</dbReference>
<dbReference type="Pfam" id="PF00565">
    <property type="entry name" value="SNase"/>
    <property type="match status" value="1"/>
</dbReference>
<dbReference type="SMART" id="SM00318">
    <property type="entry name" value="SNc"/>
    <property type="match status" value="1"/>
</dbReference>
<dbReference type="SUPFAM" id="SSF50199">
    <property type="entry name" value="Staphylococcal nuclease"/>
    <property type="match status" value="1"/>
</dbReference>
<dbReference type="PROSITE" id="PS01284">
    <property type="entry name" value="TNASE_2"/>
    <property type="match status" value="1"/>
</dbReference>
<dbReference type="PROSITE" id="PS50830">
    <property type="entry name" value="TNASE_3"/>
    <property type="match status" value="1"/>
</dbReference>
<name>CAN1_ARATH</name>
<reference key="1">
    <citation type="journal article" date="2000" name="Biochim. Biophys. Acta">
        <title>Molecular cloning of a cDNA encoding a novel Ca(2+)-dependent nuclease of Arabidopsis that is similar to staphylococcal nuclease.</title>
        <authorList>
            <person name="Isono K."/>
            <person name="Satoh K."/>
            <person name="Kobayashi H."/>
        </authorList>
    </citation>
    <scope>NUCLEOTIDE SEQUENCE [MRNA]</scope>
    <scope>FUNCTION</scope>
    <scope>ACTIVITY REGULATION</scope>
    <source>
        <strain>cv. Columbia</strain>
        <tissue>Leaf</tissue>
    </source>
</reference>
<reference key="2">
    <citation type="journal article" date="2000" name="Nature">
        <title>Sequence and analysis of chromosome 3 of the plant Arabidopsis thaliana.</title>
        <authorList>
            <person name="Salanoubat M."/>
            <person name="Lemcke K."/>
            <person name="Rieger M."/>
            <person name="Ansorge W."/>
            <person name="Unseld M."/>
            <person name="Fartmann B."/>
            <person name="Valle G."/>
            <person name="Bloecker H."/>
            <person name="Perez-Alonso M."/>
            <person name="Obermaier B."/>
            <person name="Delseny M."/>
            <person name="Boutry M."/>
            <person name="Grivell L.A."/>
            <person name="Mache R."/>
            <person name="Puigdomenech P."/>
            <person name="De Simone V."/>
            <person name="Choisne N."/>
            <person name="Artiguenave F."/>
            <person name="Robert C."/>
            <person name="Brottier P."/>
            <person name="Wincker P."/>
            <person name="Cattolico L."/>
            <person name="Weissenbach J."/>
            <person name="Saurin W."/>
            <person name="Quetier F."/>
            <person name="Schaefer M."/>
            <person name="Mueller-Auer S."/>
            <person name="Gabel C."/>
            <person name="Fuchs M."/>
            <person name="Benes V."/>
            <person name="Wurmbach E."/>
            <person name="Drzonek H."/>
            <person name="Erfle H."/>
            <person name="Jordan N."/>
            <person name="Bangert S."/>
            <person name="Wiedelmann R."/>
            <person name="Kranz H."/>
            <person name="Voss H."/>
            <person name="Holland R."/>
            <person name="Brandt P."/>
            <person name="Nyakatura G."/>
            <person name="Vezzi A."/>
            <person name="D'Angelo M."/>
            <person name="Pallavicini A."/>
            <person name="Toppo S."/>
            <person name="Simionati B."/>
            <person name="Conrad A."/>
            <person name="Hornischer K."/>
            <person name="Kauer G."/>
            <person name="Loehnert T.-H."/>
            <person name="Nordsiek G."/>
            <person name="Reichelt J."/>
            <person name="Scharfe M."/>
            <person name="Schoen O."/>
            <person name="Bargues M."/>
            <person name="Terol J."/>
            <person name="Climent J."/>
            <person name="Navarro P."/>
            <person name="Collado C."/>
            <person name="Perez-Perez A."/>
            <person name="Ottenwaelder B."/>
            <person name="Duchemin D."/>
            <person name="Cooke R."/>
            <person name="Laudie M."/>
            <person name="Berger-Llauro C."/>
            <person name="Purnelle B."/>
            <person name="Masuy D."/>
            <person name="de Haan M."/>
            <person name="Maarse A.C."/>
            <person name="Alcaraz J.-P."/>
            <person name="Cottet A."/>
            <person name="Casacuberta E."/>
            <person name="Monfort A."/>
            <person name="Argiriou A."/>
            <person name="Flores M."/>
            <person name="Liguori R."/>
            <person name="Vitale D."/>
            <person name="Mannhaupt G."/>
            <person name="Haase D."/>
            <person name="Schoof H."/>
            <person name="Rudd S."/>
            <person name="Zaccaria P."/>
            <person name="Mewes H.-W."/>
            <person name="Mayer K.F.X."/>
            <person name="Kaul S."/>
            <person name="Town C.D."/>
            <person name="Koo H.L."/>
            <person name="Tallon L.J."/>
            <person name="Jenkins J."/>
            <person name="Rooney T."/>
            <person name="Rizzo M."/>
            <person name="Walts A."/>
            <person name="Utterback T."/>
            <person name="Fujii C.Y."/>
            <person name="Shea T.P."/>
            <person name="Creasy T.H."/>
            <person name="Haas B."/>
            <person name="Maiti R."/>
            <person name="Wu D."/>
            <person name="Peterson J."/>
            <person name="Van Aken S."/>
            <person name="Pai G."/>
            <person name="Militscher J."/>
            <person name="Sellers P."/>
            <person name="Gill J.E."/>
            <person name="Feldblyum T.V."/>
            <person name="Preuss D."/>
            <person name="Lin X."/>
            <person name="Nierman W.C."/>
            <person name="Salzberg S.L."/>
            <person name="White O."/>
            <person name="Venter J.C."/>
            <person name="Fraser C.M."/>
            <person name="Kaneko T."/>
            <person name="Nakamura Y."/>
            <person name="Sato S."/>
            <person name="Kato T."/>
            <person name="Asamizu E."/>
            <person name="Sasamoto S."/>
            <person name="Kimura T."/>
            <person name="Idesawa K."/>
            <person name="Kawashima K."/>
            <person name="Kishida Y."/>
            <person name="Kiyokawa C."/>
            <person name="Kohara M."/>
            <person name="Matsumoto M."/>
            <person name="Matsuno A."/>
            <person name="Muraki A."/>
            <person name="Nakayama S."/>
            <person name="Nakazaki N."/>
            <person name="Shinpo S."/>
            <person name="Takeuchi C."/>
            <person name="Wada T."/>
            <person name="Watanabe A."/>
            <person name="Yamada M."/>
            <person name="Yasuda M."/>
            <person name="Tabata S."/>
        </authorList>
    </citation>
    <scope>NUCLEOTIDE SEQUENCE [LARGE SCALE GENOMIC DNA]</scope>
    <source>
        <strain>cv. Columbia</strain>
    </source>
</reference>
<reference key="3">
    <citation type="journal article" date="2017" name="Plant J.">
        <title>Araport11: a complete reannotation of the Arabidopsis thaliana reference genome.</title>
        <authorList>
            <person name="Cheng C.Y."/>
            <person name="Krishnakumar V."/>
            <person name="Chan A.P."/>
            <person name="Thibaud-Nissen F."/>
            <person name="Schobel S."/>
            <person name="Town C.D."/>
        </authorList>
    </citation>
    <scope>GENOME REANNOTATION</scope>
    <source>
        <strain>cv. Columbia</strain>
    </source>
</reference>
<reference key="4">
    <citation type="journal article" date="2012" name="BMC Plant Biol.">
        <title>Plant plasma membrane-bound staphylococcal-like DNases as a novel class of eukaryotic nucleases.</title>
        <authorList>
            <person name="Lesniewicz K."/>
            <person name="Poreba E."/>
            <person name="Smolarkiewicz M."/>
            <person name="Wolff N."/>
            <person name="Stanislawski S."/>
            <person name="Wojtaszek P."/>
        </authorList>
    </citation>
    <scope>FUNCTION</scope>
    <scope>ACTIVITY REGULATION</scope>
    <scope>SUBCELLULAR LOCATION</scope>
</reference>
<organism>
    <name type="scientific">Arabidopsis thaliana</name>
    <name type="common">Mouse-ear cress</name>
    <dbReference type="NCBI Taxonomy" id="3702"/>
    <lineage>
        <taxon>Eukaryota</taxon>
        <taxon>Viridiplantae</taxon>
        <taxon>Streptophyta</taxon>
        <taxon>Embryophyta</taxon>
        <taxon>Tracheophyta</taxon>
        <taxon>Spermatophyta</taxon>
        <taxon>Magnoliopsida</taxon>
        <taxon>eudicotyledons</taxon>
        <taxon>Gunneridae</taxon>
        <taxon>Pentapetalae</taxon>
        <taxon>rosids</taxon>
        <taxon>malvids</taxon>
        <taxon>Brassicales</taxon>
        <taxon>Brassicaceae</taxon>
        <taxon>Camelineae</taxon>
        <taxon>Arabidopsis</taxon>
    </lineage>
</organism>
<evidence type="ECO:0000250" key="1"/>
<evidence type="ECO:0000255" key="2"/>
<evidence type="ECO:0000255" key="3">
    <source>
        <dbReference type="PROSITE-ProRule" id="PRU00272"/>
    </source>
</evidence>
<evidence type="ECO:0000269" key="4">
    <source>
    </source>
</evidence>
<evidence type="ECO:0000269" key="5">
    <source>
    </source>
</evidence>
<evidence type="ECO:0000305" key="6"/>
<evidence type="ECO:0000305" key="7">
    <source>
    </source>
</evidence>
<gene>
    <name type="primary">CAN1</name>
    <name type="synonym">CAN</name>
    <name type="ordered locus">At3g56170</name>
    <name type="ORF">F18O21.130</name>
</gene>
<feature type="initiator methionine" description="Removed" evidence="2">
    <location>
        <position position="1"/>
    </location>
</feature>
<feature type="chain" id="PRO_0000430198" description="Staphylococcal-like nuclease CAN1">
    <location>
        <begin position="2"/>
        <end position="323"/>
    </location>
</feature>
<feature type="domain" description="TNase-like" evidence="3">
    <location>
        <begin position="130"/>
        <end position="306"/>
    </location>
</feature>
<feature type="active site" evidence="1">
    <location>
        <position position="213"/>
    </location>
</feature>
<feature type="active site" evidence="1">
    <location>
        <position position="221"/>
    </location>
</feature>
<feature type="active site" evidence="1">
    <location>
        <position position="255"/>
    </location>
</feature>
<feature type="binding site" evidence="3">
    <location>
        <position position="143"/>
    </location>
    <ligand>
        <name>Ca(2+)</name>
        <dbReference type="ChEBI" id="CHEBI:29108"/>
    </ligand>
</feature>
<feature type="binding site" evidence="3">
    <location>
        <position position="218"/>
    </location>
    <ligand>
        <name>Ca(2+)</name>
        <dbReference type="ChEBI" id="CHEBI:29108"/>
    </ligand>
</feature>
<feature type="lipid moiety-binding region" description="N-myristoyl glycine" evidence="2">
    <location>
        <position position="2"/>
    </location>
</feature>
<feature type="lipid moiety-binding region" description="S-palmitoyl cysteine" evidence="2">
    <location>
        <position position="11"/>
    </location>
</feature>
<feature type="sequence conflict" description="In Ref. 1; BAA95210." evidence="6" ref="1">
    <original>N</original>
    <variation>Y</variation>
    <location>
        <position position="318"/>
    </location>
</feature>
<comment type="function">
    <text evidence="4 5">Enzyme that catalyzes the hydrolysis of both DNA and RNA at the 5' position of the phosphodiester bond. Possesses activity toward the single-stranded DNA, double-stranded DNA and RNA. May be involved in genomic DNA degradation during programmed cell death.</text>
</comment>
<comment type="cofactor">
    <cofactor evidence="6">
        <name>Ca(2+)</name>
        <dbReference type="ChEBI" id="CHEBI:29108"/>
    </cofactor>
    <text evidence="6">Binds 1 Ca(2+) ion per subunit.</text>
</comment>
<comment type="activity regulation">
    <text evidence="4 5">Inhibited by Zn(2+).</text>
</comment>
<comment type="interaction">
    <interactant intactId="EBI-8760221">
        <id>F4IZC5</id>
    </interactant>
    <interactant intactId="EBI-8760191">
        <id>Q8H0X6</id>
        <label>CYS6</label>
    </interactant>
    <organismsDiffer>false</organismsDiffer>
    <experiments>3</experiments>
</comment>
<comment type="subcellular location">
    <subcellularLocation>
        <location evidence="7">Cell membrane</location>
        <topology evidence="7">Lipid-anchor</topology>
    </subcellularLocation>
</comment>
<comment type="similarity">
    <text evidence="3">Belongs to the thermonuclease family.</text>
</comment>
<comment type="sequence caution" evidence="6">
    <conflict type="erroneous gene model prediction">
        <sequence resource="EMBL-CDS" id="CAB87416"/>
    </conflict>
</comment>
<sequence>MGNAIRLLRKCLNSHGVSASSGGVSALSRDLLNFETTSQVPEKLGSYVVSSQKAQANWYRKILEAWKQAKPRPKTPEEASRLVIAALKNHQKADVEGLLSFYGLPSPHNLVEVPTEAPVSLPKGVRFELNTLPVDTKSVADGDTVTVYVSSKDPLVSSSLPKDVSLAAVKRAKAREKKNYTEADALHKTIIASGYRMISFQNEEVLAKKFRIRLSGIDSPESKMPYGKEAHDELLKMVEGKCLKVLVYTEDRYGRCVGDIYCNGKFVQEVMLKKGLAWHYVAYDKRAELAKWENEARQKRVGLWASSNPEKPWEWRKNKRGGN</sequence>